<gene>
    <name type="ordered locus">A2cp1_4387</name>
</gene>
<name>3MGH_ANAD2</name>
<dbReference type="EC" id="3.2.2.-" evidence="1"/>
<dbReference type="EMBL" id="CP001359">
    <property type="protein sequence ID" value="ACL67704.1"/>
    <property type="molecule type" value="Genomic_DNA"/>
</dbReference>
<dbReference type="RefSeq" id="WP_015935392.1">
    <property type="nucleotide sequence ID" value="NC_011891.1"/>
</dbReference>
<dbReference type="SMR" id="B8JBU6"/>
<dbReference type="KEGG" id="acp:A2cp1_4387"/>
<dbReference type="HOGENOM" id="CLU_060471_3_0_7"/>
<dbReference type="Proteomes" id="UP000007089">
    <property type="component" value="Chromosome"/>
</dbReference>
<dbReference type="GO" id="GO:0003905">
    <property type="term" value="F:alkylbase DNA N-glycosylase activity"/>
    <property type="evidence" value="ECO:0007669"/>
    <property type="project" value="InterPro"/>
</dbReference>
<dbReference type="GO" id="GO:0003677">
    <property type="term" value="F:DNA binding"/>
    <property type="evidence" value="ECO:0007669"/>
    <property type="project" value="InterPro"/>
</dbReference>
<dbReference type="GO" id="GO:0006284">
    <property type="term" value="P:base-excision repair"/>
    <property type="evidence" value="ECO:0007669"/>
    <property type="project" value="InterPro"/>
</dbReference>
<dbReference type="CDD" id="cd00540">
    <property type="entry name" value="AAG"/>
    <property type="match status" value="1"/>
</dbReference>
<dbReference type="FunFam" id="3.10.300.10:FF:000001">
    <property type="entry name" value="Putative 3-methyladenine DNA glycosylase"/>
    <property type="match status" value="1"/>
</dbReference>
<dbReference type="Gene3D" id="3.10.300.10">
    <property type="entry name" value="Methylpurine-DNA glycosylase (MPG)"/>
    <property type="match status" value="1"/>
</dbReference>
<dbReference type="HAMAP" id="MF_00527">
    <property type="entry name" value="3MGH"/>
    <property type="match status" value="1"/>
</dbReference>
<dbReference type="InterPro" id="IPR011034">
    <property type="entry name" value="Formyl_transferase-like_C_sf"/>
</dbReference>
<dbReference type="InterPro" id="IPR003180">
    <property type="entry name" value="MPG"/>
</dbReference>
<dbReference type="InterPro" id="IPR036995">
    <property type="entry name" value="MPG_sf"/>
</dbReference>
<dbReference type="NCBIfam" id="TIGR00567">
    <property type="entry name" value="3mg"/>
    <property type="match status" value="1"/>
</dbReference>
<dbReference type="PANTHER" id="PTHR10429">
    <property type="entry name" value="DNA-3-METHYLADENINE GLYCOSYLASE"/>
    <property type="match status" value="1"/>
</dbReference>
<dbReference type="PANTHER" id="PTHR10429:SF0">
    <property type="entry name" value="DNA-3-METHYLADENINE GLYCOSYLASE"/>
    <property type="match status" value="1"/>
</dbReference>
<dbReference type="Pfam" id="PF02245">
    <property type="entry name" value="Pur_DNA_glyco"/>
    <property type="match status" value="1"/>
</dbReference>
<dbReference type="SUPFAM" id="SSF50486">
    <property type="entry name" value="FMT C-terminal domain-like"/>
    <property type="match status" value="1"/>
</dbReference>
<keyword id="KW-0227">DNA damage</keyword>
<keyword id="KW-0234">DNA repair</keyword>
<keyword id="KW-0378">Hydrolase</keyword>
<reference key="1">
    <citation type="submission" date="2009-01" db="EMBL/GenBank/DDBJ databases">
        <title>Complete sequence of Anaeromyxobacter dehalogenans 2CP-1.</title>
        <authorList>
            <person name="Lucas S."/>
            <person name="Copeland A."/>
            <person name="Lapidus A."/>
            <person name="Glavina del Rio T."/>
            <person name="Dalin E."/>
            <person name="Tice H."/>
            <person name="Bruce D."/>
            <person name="Goodwin L."/>
            <person name="Pitluck S."/>
            <person name="Saunders E."/>
            <person name="Brettin T."/>
            <person name="Detter J.C."/>
            <person name="Han C."/>
            <person name="Larimer F."/>
            <person name="Land M."/>
            <person name="Hauser L."/>
            <person name="Kyrpides N."/>
            <person name="Ovchinnikova G."/>
            <person name="Beliaev A.S."/>
            <person name="Richardson P."/>
        </authorList>
    </citation>
    <scope>NUCLEOTIDE SEQUENCE [LARGE SCALE GENOMIC DNA]</scope>
    <source>
        <strain>2CP-1 / ATCC BAA-258</strain>
    </source>
</reference>
<protein>
    <recommendedName>
        <fullName evidence="1">Putative 3-methyladenine DNA glycosylase</fullName>
        <ecNumber evidence="1">3.2.2.-</ecNumber>
    </recommendedName>
</protein>
<accession>B8JBU6</accession>
<proteinExistence type="inferred from homology"/>
<organism>
    <name type="scientific">Anaeromyxobacter dehalogenans (strain 2CP-1 / ATCC BAA-258)</name>
    <dbReference type="NCBI Taxonomy" id="455488"/>
    <lineage>
        <taxon>Bacteria</taxon>
        <taxon>Pseudomonadati</taxon>
        <taxon>Myxococcota</taxon>
        <taxon>Myxococcia</taxon>
        <taxon>Myxococcales</taxon>
        <taxon>Cystobacterineae</taxon>
        <taxon>Anaeromyxobacteraceae</taxon>
        <taxon>Anaeromyxobacter</taxon>
    </lineage>
</organism>
<feature type="chain" id="PRO_1000146258" description="Putative 3-methyladenine DNA glycosylase">
    <location>
        <begin position="1"/>
        <end position="210"/>
    </location>
</feature>
<feature type="region of interest" description="Disordered" evidence="2">
    <location>
        <begin position="180"/>
        <end position="210"/>
    </location>
</feature>
<feature type="compositionally biased region" description="Low complexity" evidence="2">
    <location>
        <begin position="186"/>
        <end position="196"/>
    </location>
</feature>
<feature type="compositionally biased region" description="Basic residues" evidence="2">
    <location>
        <begin position="201"/>
        <end position="210"/>
    </location>
</feature>
<evidence type="ECO:0000255" key="1">
    <source>
        <dbReference type="HAMAP-Rule" id="MF_00527"/>
    </source>
</evidence>
<evidence type="ECO:0000256" key="2">
    <source>
        <dbReference type="SAM" id="MobiDB-lite"/>
    </source>
</evidence>
<comment type="similarity">
    <text evidence="1">Belongs to the DNA glycosylase MPG family.</text>
</comment>
<sequence length="210" mass="22314">MKLPQAFYARDTRTVARALLGKVLVHLDGGVRRAARIVETEAYHGPDDRASHARAGPTPRAAIMFGPPGRAYVYLIYGTSHCMNVVTGPEGFPSAVLLRAAEPIDGCLHSTRGPGNLCRALAIRREHDNGRDLAGDDLFVEDAPPPSEAVVTGPRVNVGYAGAWAARPWRFALRGSPWVSRPPPGAAAARAARAPAAPAPRPRRPRGSGP</sequence>